<gene>
    <name type="primary">OSH1</name>
    <name type="ordered locus">Os03g0727000</name>
    <name type="ordered locus">LOC_Os03g51690</name>
    <name type="ORF">OSJNBa0013A09.5</name>
</gene>
<comment type="function">
    <text evidence="4 5 6 7">Transcription factor that regulates genes involved in development. May be involved in shoot formation during embryogenesis. Overexpression in transgenic plants causes altered leaf morphology (PubMed:10488233, PubMed:8755613, PubMed:9869405). Regulates anther dehiscence via direct repression of the auxin biosynthetic gene YUCCA4 (PubMed:29915329). Binds to the DNA sequence 5'-TGAC-3' in the promoter of the YUCCA4 gene and represses its activity during anther development (PubMed:29915329). Reduction of auxin levels at late stage of anther development, after meiosis of microspore mother cells, is necessary for normal anther dehiscence and seed setting (PubMed:29915329).</text>
</comment>
<comment type="subunit">
    <text evidence="5">Interacts with FTIP7.</text>
</comment>
<comment type="subcellular location">
    <subcellularLocation>
        <location evidence="5">Nucleus</location>
    </subcellularLocation>
    <subcellularLocation>
        <location evidence="5">Cytoplasm</location>
    </subcellularLocation>
    <text evidence="5">Localizes mainly in the nucleus (PubMed:29915329). Translocation from the cytoplasm to the nucleus is facilitated by FTIP7 (PubMed:29915329).</text>
</comment>
<comment type="alternative products">
    <event type="alternative splicing"/>
    <isoform>
        <id>P46609-1</id>
        <name>1</name>
        <sequence type="displayed"/>
    </isoform>
    <isoform>
        <id>P46609-2</id>
        <name>2</name>
        <sequence type="described" ref="VSP_036180 VSP_036181"/>
    </isoform>
</comment>
<comment type="tissue specificity">
    <text>Expressed predominantly in shoot apices. Also found to a lesser extent in glumes.</text>
</comment>
<comment type="developmental stage">
    <text evidence="4 6 7">Expressed in the globular stage embryo 2 days after pollination (DAP) in a restricted small region just below the center of the ventral region of the embryo, where the shoot apex arises later. From 3 to 4 DAP expressed in an enlarged ventral region of embryo, corresponding to the expected epiblast and radicle, respectively. At the shoot apex differentiation stage (4-5 DAP), expressed in the shoot apex, epiblast, radicle primordia, and in their intervening tissues. Expression in the radicle is observed in the cells surrounding the root apical meristem in a donut shape but not in the meristem. During the first and second leaf primordium formation, expression pattern is maintained, but decreases. During inflorescence development, expressed only in the corpus of the rachis primordium but not in the tunica layer (L1). After floral induction, expressed in both tunica and corpus but not in floral organ primordia. Later in flower development, expressed in the corpus of the floral meristem.</text>
</comment>
<comment type="disruption phenotype">
    <text evidence="5">Early termination of shoot meristems, reduced leaf formation and reduced seed setting.</text>
</comment>
<comment type="similarity">
    <text evidence="2">Belongs to the TALE/KNOX homeobox family.</text>
</comment>
<comment type="sequence caution" evidence="8">
    <conflict type="erroneous gene model prediction">
        <sequence resource="EMBL-CDS" id="BAF13053"/>
    </conflict>
</comment>
<reference key="1">
    <citation type="journal article" date="1993" name="Plant Cell">
        <title>Expression of a rice homeobox gene causes altered morphology of transgenic plants.</title>
        <authorList>
            <person name="Matsuoka M."/>
            <person name="Ichikawa H."/>
            <person name="Saito A."/>
            <person name="Tada Y."/>
            <person name="Fujimura T."/>
            <person name="Kano-Murakami Y."/>
        </authorList>
    </citation>
    <scope>NUCLEOTIDE SEQUENCE [MRNA] (ISOFORM 1)</scope>
    <source>
        <strain>cv. Nipponbare</strain>
        <tissue>Seedling</tissue>
    </source>
</reference>
<reference key="2">
    <citation type="journal article" date="2005" name="Genome Res.">
        <title>Sequence, annotation, and analysis of synteny between rice chromosome 3 and diverged grass species.</title>
        <authorList>
            <consortium name="The rice chromosome 3 sequencing consortium"/>
            <person name="Buell C.R."/>
            <person name="Yuan Q."/>
            <person name="Ouyang S."/>
            <person name="Liu J."/>
            <person name="Zhu W."/>
            <person name="Wang A."/>
            <person name="Maiti R."/>
            <person name="Haas B."/>
            <person name="Wortman J."/>
            <person name="Pertea M."/>
            <person name="Jones K.M."/>
            <person name="Kim M."/>
            <person name="Overton L."/>
            <person name="Tsitrin T."/>
            <person name="Fadrosh D."/>
            <person name="Bera J."/>
            <person name="Weaver B."/>
            <person name="Jin S."/>
            <person name="Johri S."/>
            <person name="Reardon M."/>
            <person name="Webb K."/>
            <person name="Hill J."/>
            <person name="Moffat K."/>
            <person name="Tallon L."/>
            <person name="Van Aken S."/>
            <person name="Lewis M."/>
            <person name="Utterback T."/>
            <person name="Feldblyum T."/>
            <person name="Zismann V."/>
            <person name="Iobst S."/>
            <person name="Hsiao J."/>
            <person name="de Vazeille A.R."/>
            <person name="Salzberg S.L."/>
            <person name="White O."/>
            <person name="Fraser C.M."/>
            <person name="Yu Y."/>
            <person name="Kim H."/>
            <person name="Rambo T."/>
            <person name="Currie J."/>
            <person name="Collura K."/>
            <person name="Kernodle-Thompson S."/>
            <person name="Wei F."/>
            <person name="Kudrna K."/>
            <person name="Ammiraju J.S.S."/>
            <person name="Luo M."/>
            <person name="Goicoechea J.L."/>
            <person name="Wing R.A."/>
            <person name="Henry D."/>
            <person name="Oates R."/>
            <person name="Palmer M."/>
            <person name="Pries G."/>
            <person name="Saski C."/>
            <person name="Simmons J."/>
            <person name="Soderlund C."/>
            <person name="Nelson W."/>
            <person name="de la Bastide M."/>
            <person name="Spiegel L."/>
            <person name="Nascimento L."/>
            <person name="Huang E."/>
            <person name="Preston R."/>
            <person name="Zutavern T."/>
            <person name="Palmer L."/>
            <person name="O'Shaughnessy A."/>
            <person name="Dike S."/>
            <person name="McCombie W.R."/>
            <person name="Minx P."/>
            <person name="Cordum H."/>
            <person name="Wilson R."/>
            <person name="Jin W."/>
            <person name="Lee H.R."/>
            <person name="Jiang J."/>
            <person name="Jackson S."/>
        </authorList>
    </citation>
    <scope>NUCLEOTIDE SEQUENCE [LARGE SCALE GENOMIC DNA]</scope>
    <source>
        <strain>cv. Nipponbare</strain>
    </source>
</reference>
<reference key="3">
    <citation type="journal article" date="2005" name="Nature">
        <title>The map-based sequence of the rice genome.</title>
        <authorList>
            <consortium name="International rice genome sequencing project (IRGSP)"/>
        </authorList>
    </citation>
    <scope>NUCLEOTIDE SEQUENCE [LARGE SCALE GENOMIC DNA]</scope>
    <source>
        <strain>cv. Nipponbare</strain>
    </source>
</reference>
<reference key="4">
    <citation type="journal article" date="2008" name="Nucleic Acids Res.">
        <title>The rice annotation project database (RAP-DB): 2008 update.</title>
        <authorList>
            <consortium name="The rice annotation project (RAP)"/>
        </authorList>
    </citation>
    <scope>GENOME REANNOTATION</scope>
    <source>
        <strain>cv. Nipponbare</strain>
    </source>
</reference>
<reference key="5">
    <citation type="journal article" date="2013" name="Rice">
        <title>Improvement of the Oryza sativa Nipponbare reference genome using next generation sequence and optical map data.</title>
        <authorList>
            <person name="Kawahara Y."/>
            <person name="de la Bastide M."/>
            <person name="Hamilton J.P."/>
            <person name="Kanamori H."/>
            <person name="McCombie W.R."/>
            <person name="Ouyang S."/>
            <person name="Schwartz D.C."/>
            <person name="Tanaka T."/>
            <person name="Wu J."/>
            <person name="Zhou S."/>
            <person name="Childs K.L."/>
            <person name="Davidson R.M."/>
            <person name="Lin H."/>
            <person name="Quesada-Ocampo L."/>
            <person name="Vaillancourt B."/>
            <person name="Sakai H."/>
            <person name="Lee S.S."/>
            <person name="Kim J."/>
            <person name="Numa H."/>
            <person name="Itoh T."/>
            <person name="Buell C.R."/>
            <person name="Matsumoto T."/>
        </authorList>
    </citation>
    <scope>GENOME REANNOTATION</scope>
    <source>
        <strain>cv. Nipponbare</strain>
    </source>
</reference>
<reference key="6">
    <citation type="journal article" date="1996" name="Proc. Natl. Acad. Sci. U.S.A.">
        <title>A rice homeobox gene, OSH1, is expressed before organ differentiation in a specific region during early embryogenesis.</title>
        <authorList>
            <person name="Sato Y."/>
            <person name="Hong S.-K."/>
            <person name="Tagiri A."/>
            <person name="Kitano H."/>
            <person name="Yamamoto N."/>
            <person name="Nagato Y."/>
            <person name="Matsuoka M."/>
        </authorList>
    </citation>
    <scope>FUNCTION</scope>
    <scope>DEVELOPMENTAL STAGE</scope>
</reference>
<reference key="7">
    <citation type="journal article" date="1998" name="Plant Mol. Biol.">
        <title>Isolation and characterization of a rice homeobox gene, OSH15.</title>
        <authorList>
            <person name="Sato Y."/>
            <person name="Sentoku N."/>
            <person name="Nagato Y."/>
            <person name="Matsuoka M."/>
        </authorList>
    </citation>
    <scope>FUNCTION</scope>
    <scope>DEVELOPMENTAL STAGE</scope>
</reference>
<reference key="8">
    <citation type="journal article" date="1999" name="Plant Cell">
        <title>Regional expression of the rice KN1-type homeobox gene family during embryo, shoot, and flower development.</title>
        <authorList>
            <person name="Sentoku N."/>
            <person name="Sato Y."/>
            <person name="Kurata N."/>
            <person name="Ito Y."/>
            <person name="Kitano H."/>
            <person name="Matsuoka M."/>
        </authorList>
    </citation>
    <scope>FUNCTION</scope>
    <scope>DEVELOPMENTAL STAGE</scope>
</reference>
<reference key="9">
    <citation type="journal article" date="2008" name="FEBS J.">
        <title>Genome-wide identification, classification, evolutionary expansion and expression analyses of homeobox genes in rice.</title>
        <authorList>
            <person name="Jain M."/>
            <person name="Tyagi A.K."/>
            <person name="Khurana J.P."/>
        </authorList>
    </citation>
    <scope>GENE FAMILY</scope>
    <scope>NOMENCLATURE</scope>
</reference>
<reference key="10">
    <citation type="journal article" date="2018" name="Nat. Plants">
        <title>OsFTIP7 determines auxin-mediated anther dehiscence in rice.</title>
        <authorList>
            <person name="Song S."/>
            <person name="Chen Y."/>
            <person name="Liu L."/>
            <person name="See Y.H.B."/>
            <person name="Mao C."/>
            <person name="Gan Y."/>
            <person name="Yu H."/>
        </authorList>
    </citation>
    <scope>FUNCTION</scope>
    <scope>INTERACTION WITH FTIP7</scope>
    <scope>SUBCELLULAR LOCATION</scope>
    <scope>DISRUPTION PHENOTYPE</scope>
</reference>
<dbReference type="EMBL" id="D16507">
    <property type="protein sequence ID" value="BAA03959.1"/>
    <property type="molecule type" value="mRNA"/>
</dbReference>
<dbReference type="EMBL" id="AC145380">
    <property type="protein sequence ID" value="AAS07158.1"/>
    <property type="molecule type" value="Genomic_DNA"/>
</dbReference>
<dbReference type="EMBL" id="DP000009">
    <property type="protein sequence ID" value="ABF98651.1"/>
    <property type="molecule type" value="Genomic_DNA"/>
</dbReference>
<dbReference type="EMBL" id="DP000009">
    <property type="protein sequence ID" value="ABF98653.1"/>
    <property type="molecule type" value="Genomic_DNA"/>
</dbReference>
<dbReference type="EMBL" id="AP008209">
    <property type="protein sequence ID" value="BAF13053.2"/>
    <property type="status" value="ALT_SEQ"/>
    <property type="molecule type" value="Genomic_DNA"/>
</dbReference>
<dbReference type="EMBL" id="AP014959">
    <property type="protein sequence ID" value="BAS86183.1"/>
    <property type="molecule type" value="Genomic_DNA"/>
</dbReference>
<dbReference type="RefSeq" id="XP_015629392.1">
    <property type="nucleotide sequence ID" value="XM_015773906.1"/>
</dbReference>
<dbReference type="SMR" id="P46609"/>
<dbReference type="FunCoup" id="P46609">
    <property type="interactions" value="294"/>
</dbReference>
<dbReference type="STRING" id="39947.P46609"/>
<dbReference type="PaxDb" id="39947-P46609"/>
<dbReference type="EnsemblPlants" id="Os03t0727000-02">
    <molecule id="P46609-1"/>
    <property type="protein sequence ID" value="Os03t0727000-02"/>
    <property type="gene ID" value="Os03g0727000"/>
</dbReference>
<dbReference type="Gramene" id="Os03t0727000-02">
    <molecule id="P46609-1"/>
    <property type="protein sequence ID" value="Os03t0727000-02"/>
    <property type="gene ID" value="Os03g0727000"/>
</dbReference>
<dbReference type="KEGG" id="dosa:Os03g0727000"/>
<dbReference type="InParanoid" id="P46609"/>
<dbReference type="OrthoDB" id="10056939at2759"/>
<dbReference type="PlantReactome" id="R-OSA-9631623">
    <property type="pathway name" value="Regulation of embryo development"/>
</dbReference>
<dbReference type="PlantReactome" id="R-OSA-9826782">
    <property type="pathway name" value="Regulation of seed germination and coleoptile growth under submergence and normal gravity environment"/>
</dbReference>
<dbReference type="Proteomes" id="UP000000763">
    <property type="component" value="Chromosome 3"/>
</dbReference>
<dbReference type="Proteomes" id="UP000059680">
    <property type="component" value="Chromosome 3"/>
</dbReference>
<dbReference type="ExpressionAtlas" id="P46609">
    <property type="expression patterns" value="baseline and differential"/>
</dbReference>
<dbReference type="GO" id="GO:0005737">
    <property type="term" value="C:cytoplasm"/>
    <property type="evidence" value="ECO:0000314"/>
    <property type="project" value="UniProtKB"/>
</dbReference>
<dbReference type="GO" id="GO:0005634">
    <property type="term" value="C:nucleus"/>
    <property type="evidence" value="ECO:0000314"/>
    <property type="project" value="UniProtKB"/>
</dbReference>
<dbReference type="GO" id="GO:0003677">
    <property type="term" value="F:DNA binding"/>
    <property type="evidence" value="ECO:0000315"/>
    <property type="project" value="Gramene"/>
</dbReference>
<dbReference type="GO" id="GO:0003700">
    <property type="term" value="F:DNA-binding transcription factor activity"/>
    <property type="evidence" value="ECO:0000314"/>
    <property type="project" value="UniProtKB"/>
</dbReference>
<dbReference type="GO" id="GO:0000981">
    <property type="term" value="F:DNA-binding transcription factor activity, RNA polymerase II-specific"/>
    <property type="evidence" value="ECO:0007669"/>
    <property type="project" value="InterPro"/>
</dbReference>
<dbReference type="GO" id="GO:0043565">
    <property type="term" value="F:sequence-specific DNA binding"/>
    <property type="evidence" value="ECO:0000314"/>
    <property type="project" value="UniProtKB"/>
</dbReference>
<dbReference type="GO" id="GO:0009901">
    <property type="term" value="P:anther dehiscence"/>
    <property type="evidence" value="ECO:0000315"/>
    <property type="project" value="UniProtKB"/>
</dbReference>
<dbReference type="GO" id="GO:0010930">
    <property type="term" value="P:negative regulation of auxin mediated signaling pathway"/>
    <property type="evidence" value="ECO:0000315"/>
    <property type="project" value="UniProtKB"/>
</dbReference>
<dbReference type="GO" id="GO:0045892">
    <property type="term" value="P:negative regulation of DNA-templated transcription"/>
    <property type="evidence" value="ECO:0000314"/>
    <property type="project" value="UniProtKB"/>
</dbReference>
<dbReference type="GO" id="GO:0006355">
    <property type="term" value="P:regulation of DNA-templated transcription"/>
    <property type="evidence" value="ECO:0000315"/>
    <property type="project" value="Gramene"/>
</dbReference>
<dbReference type="CDD" id="cd00086">
    <property type="entry name" value="homeodomain"/>
    <property type="match status" value="1"/>
</dbReference>
<dbReference type="FunFam" id="1.10.10.60:FF:000076">
    <property type="entry name" value="Homeobox protein knotted-1-like 2"/>
    <property type="match status" value="1"/>
</dbReference>
<dbReference type="Gene3D" id="1.10.10.60">
    <property type="entry name" value="Homeodomain-like"/>
    <property type="match status" value="1"/>
</dbReference>
<dbReference type="InterPro" id="IPR005539">
    <property type="entry name" value="ELK_dom"/>
</dbReference>
<dbReference type="InterPro" id="IPR001356">
    <property type="entry name" value="HD"/>
</dbReference>
<dbReference type="InterPro" id="IPR017970">
    <property type="entry name" value="Homeobox_CS"/>
</dbReference>
<dbReference type="InterPro" id="IPR009057">
    <property type="entry name" value="Homeodomain-like_sf"/>
</dbReference>
<dbReference type="InterPro" id="IPR008422">
    <property type="entry name" value="KN_HD"/>
</dbReference>
<dbReference type="InterPro" id="IPR005540">
    <property type="entry name" value="KNOX1"/>
</dbReference>
<dbReference type="InterPro" id="IPR005541">
    <property type="entry name" value="KNOX2"/>
</dbReference>
<dbReference type="InterPro" id="IPR050224">
    <property type="entry name" value="TALE_homeobox"/>
</dbReference>
<dbReference type="PANTHER" id="PTHR11850">
    <property type="entry name" value="HOMEOBOX PROTEIN TRANSCRIPTION FACTORS"/>
    <property type="match status" value="1"/>
</dbReference>
<dbReference type="Pfam" id="PF03789">
    <property type="entry name" value="ELK"/>
    <property type="match status" value="1"/>
</dbReference>
<dbReference type="Pfam" id="PF05920">
    <property type="entry name" value="Homeobox_KN"/>
    <property type="match status" value="1"/>
</dbReference>
<dbReference type="Pfam" id="PF03790">
    <property type="entry name" value="KNOX1"/>
    <property type="match status" value="1"/>
</dbReference>
<dbReference type="Pfam" id="PF03791">
    <property type="entry name" value="KNOX2"/>
    <property type="match status" value="1"/>
</dbReference>
<dbReference type="SMART" id="SM01188">
    <property type="entry name" value="ELK"/>
    <property type="match status" value="2"/>
</dbReference>
<dbReference type="SMART" id="SM00389">
    <property type="entry name" value="HOX"/>
    <property type="match status" value="1"/>
</dbReference>
<dbReference type="SMART" id="SM01255">
    <property type="entry name" value="KNOX1"/>
    <property type="match status" value="1"/>
</dbReference>
<dbReference type="SMART" id="SM01256">
    <property type="entry name" value="KNOX2"/>
    <property type="match status" value="1"/>
</dbReference>
<dbReference type="SUPFAM" id="SSF46689">
    <property type="entry name" value="Homeodomain-like"/>
    <property type="match status" value="1"/>
</dbReference>
<dbReference type="PROSITE" id="PS51213">
    <property type="entry name" value="ELK"/>
    <property type="match status" value="1"/>
</dbReference>
<dbReference type="PROSITE" id="PS00027">
    <property type="entry name" value="HOMEOBOX_1"/>
    <property type="match status" value="1"/>
</dbReference>
<dbReference type="PROSITE" id="PS50071">
    <property type="entry name" value="HOMEOBOX_2"/>
    <property type="match status" value="1"/>
</dbReference>
<accession>P46609</accession>
<accession>Q0DNY5</accession>
<accession>Q10DL4</accession>
<accession>Q10DL5</accession>
<accession>Q75GJ3</accession>
<feature type="chain" id="PRO_0000049203" description="Homeobox protein knotted-1-like 6">
    <location>
        <begin position="1"/>
        <end position="361"/>
    </location>
</feature>
<feature type="domain" description="ELK" evidence="2">
    <location>
        <begin position="242"/>
        <end position="262"/>
    </location>
</feature>
<feature type="DNA-binding region" description="Homeobox; TALE-type" evidence="1">
    <location>
        <begin position="263"/>
        <end position="326"/>
    </location>
</feature>
<feature type="region of interest" description="Disordered" evidence="3">
    <location>
        <begin position="11"/>
        <end position="48"/>
    </location>
</feature>
<feature type="compositionally biased region" description="Basic residues" evidence="3">
    <location>
        <begin position="19"/>
        <end position="28"/>
    </location>
</feature>
<feature type="splice variant" id="VSP_036180" description="In isoform 2." evidence="8">
    <location>
        <begin position="1"/>
        <end position="119"/>
    </location>
</feature>
<feature type="splice variant" id="VSP_036181" description="In isoform 2." evidence="8">
    <original>AYLDCQK</original>
    <variation>MCRGGLQ</variation>
    <location>
        <begin position="120"/>
        <end position="126"/>
    </location>
</feature>
<feature type="sequence conflict" description="In Ref. 1; BAA03959." evidence="8" ref="1">
    <original>A</original>
    <variation>P</variation>
    <location>
        <position position="99"/>
    </location>
</feature>
<organism>
    <name type="scientific">Oryza sativa subsp. japonica</name>
    <name type="common">Rice</name>
    <dbReference type="NCBI Taxonomy" id="39947"/>
    <lineage>
        <taxon>Eukaryota</taxon>
        <taxon>Viridiplantae</taxon>
        <taxon>Streptophyta</taxon>
        <taxon>Embryophyta</taxon>
        <taxon>Tracheophyta</taxon>
        <taxon>Spermatophyta</taxon>
        <taxon>Magnoliopsida</taxon>
        <taxon>Liliopsida</taxon>
        <taxon>Poales</taxon>
        <taxon>Poaceae</taxon>
        <taxon>BOP clade</taxon>
        <taxon>Oryzoideae</taxon>
        <taxon>Oryzeae</taxon>
        <taxon>Oryzinae</taxon>
        <taxon>Oryza</taxon>
        <taxon>Oryza sativa</taxon>
    </lineage>
</organism>
<proteinExistence type="evidence at protein level"/>
<protein>
    <recommendedName>
        <fullName>Homeobox protein knotted-1-like 6</fullName>
    </recommendedName>
    <alternativeName>
        <fullName>Homeobox protein OSH1</fullName>
    </alternativeName>
    <alternativeName>
        <fullName>Homeobox protein knotted-1-like 1</fullName>
        <shortName>Oskn1</shortName>
    </alternativeName>
</protein>
<name>KNOS6_ORYSJ</name>
<evidence type="ECO:0000255" key="1">
    <source>
        <dbReference type="PROSITE-ProRule" id="PRU00108"/>
    </source>
</evidence>
<evidence type="ECO:0000255" key="2">
    <source>
        <dbReference type="PROSITE-ProRule" id="PRU00559"/>
    </source>
</evidence>
<evidence type="ECO:0000256" key="3">
    <source>
        <dbReference type="SAM" id="MobiDB-lite"/>
    </source>
</evidence>
<evidence type="ECO:0000269" key="4">
    <source>
    </source>
</evidence>
<evidence type="ECO:0000269" key="5">
    <source>
    </source>
</evidence>
<evidence type="ECO:0000269" key="6">
    <source>
    </source>
</evidence>
<evidence type="ECO:0000269" key="7">
    <source>
    </source>
</evidence>
<evidence type="ECO:0000305" key="8"/>
<keyword id="KW-0025">Alternative splicing</keyword>
<keyword id="KW-0963">Cytoplasm</keyword>
<keyword id="KW-0238">DNA-binding</keyword>
<keyword id="KW-0371">Homeobox</keyword>
<keyword id="KW-0539">Nucleus</keyword>
<keyword id="KW-1185">Reference proteome</keyword>
<keyword id="KW-0678">Repressor</keyword>
<keyword id="KW-0804">Transcription</keyword>
<keyword id="KW-0805">Transcription regulation</keyword>
<sequence>MEEISHHFGVVGASGVHGGHQHQHHHHPWGSSLSAIVAPPPPPQLQQQQTQAGGMAHTPLTLNTAAAAVGNPVLQLANGSLLDACGKAKEASASASYAADVEAIKAKIISHPHYSSLLAAYLDCQKVGAPPEVAARLTAVAQDLELRQRTALGVLGAATEPELDQFMEAYHEMLVKYREELTRPLQEAMEFLRRVETQLNTLSISGRSLRNILSSGSSEEDQEGSGGETELPEIDAHGVDQELKHHLLKKYSGYLSSLKQELSKKKKKGKLPKDARQQLLNWWELHYKWPYPSESQKVALAESTGLDLKQINNWFINQRKRHWKPSDEMQFVMMDGYHPTNAAAFYMDGHFINDGGLYRLG</sequence>